<proteinExistence type="inferred from homology"/>
<feature type="chain" id="PRO_0000182904" description="Deoxyuridine 5'-triphosphate nucleotidohydrolase">
    <location>
        <begin position="1"/>
        <end position="148"/>
    </location>
</feature>
<feature type="binding site" evidence="1">
    <location>
        <begin position="68"/>
        <end position="70"/>
    </location>
    <ligand>
        <name>substrate</name>
    </ligand>
</feature>
<feature type="binding site" evidence="1">
    <location>
        <position position="81"/>
    </location>
    <ligand>
        <name>substrate</name>
    </ligand>
</feature>
<feature type="binding site" evidence="1">
    <location>
        <begin position="85"/>
        <end position="87"/>
    </location>
    <ligand>
        <name>substrate</name>
    </ligand>
</feature>
<feature type="binding site" evidence="1">
    <location>
        <position position="95"/>
    </location>
    <ligand>
        <name>substrate</name>
    </ligand>
</feature>
<protein>
    <recommendedName>
        <fullName evidence="1">Deoxyuridine 5'-triphosphate nucleotidohydrolase</fullName>
        <shortName evidence="1">dUTPase</shortName>
        <ecNumber evidence="1">3.6.1.23</ecNumber>
    </recommendedName>
    <alternativeName>
        <fullName evidence="1">dUTP pyrophosphatase</fullName>
    </alternativeName>
</protein>
<gene>
    <name evidence="1" type="primary">dut</name>
    <name type="ordered locus">RT0387</name>
</gene>
<organism>
    <name type="scientific">Rickettsia typhi (strain ATCC VR-144 / Wilmington)</name>
    <dbReference type="NCBI Taxonomy" id="257363"/>
    <lineage>
        <taxon>Bacteria</taxon>
        <taxon>Pseudomonadati</taxon>
        <taxon>Pseudomonadota</taxon>
        <taxon>Alphaproteobacteria</taxon>
        <taxon>Rickettsiales</taxon>
        <taxon>Rickettsiaceae</taxon>
        <taxon>Rickettsieae</taxon>
        <taxon>Rickettsia</taxon>
        <taxon>typhus group</taxon>
    </lineage>
</organism>
<evidence type="ECO:0000255" key="1">
    <source>
        <dbReference type="HAMAP-Rule" id="MF_00116"/>
    </source>
</evidence>
<dbReference type="EC" id="3.6.1.23" evidence="1"/>
<dbReference type="EMBL" id="AE017197">
    <property type="protein sequence ID" value="AAU03864.1"/>
    <property type="molecule type" value="Genomic_DNA"/>
</dbReference>
<dbReference type="RefSeq" id="WP_011190848.1">
    <property type="nucleotide sequence ID" value="NC_006142.1"/>
</dbReference>
<dbReference type="SMR" id="Q68WX8"/>
<dbReference type="KEGG" id="rty:RT0387"/>
<dbReference type="eggNOG" id="COG0756">
    <property type="taxonomic scope" value="Bacteria"/>
</dbReference>
<dbReference type="HOGENOM" id="CLU_068508_1_2_5"/>
<dbReference type="OrthoDB" id="9809956at2"/>
<dbReference type="UniPathway" id="UPA00610">
    <property type="reaction ID" value="UER00666"/>
</dbReference>
<dbReference type="Proteomes" id="UP000000604">
    <property type="component" value="Chromosome"/>
</dbReference>
<dbReference type="GO" id="GO:0004170">
    <property type="term" value="F:dUTP diphosphatase activity"/>
    <property type="evidence" value="ECO:0007669"/>
    <property type="project" value="UniProtKB-UniRule"/>
</dbReference>
<dbReference type="GO" id="GO:0000287">
    <property type="term" value="F:magnesium ion binding"/>
    <property type="evidence" value="ECO:0007669"/>
    <property type="project" value="UniProtKB-UniRule"/>
</dbReference>
<dbReference type="GO" id="GO:0006226">
    <property type="term" value="P:dUMP biosynthetic process"/>
    <property type="evidence" value="ECO:0007669"/>
    <property type="project" value="UniProtKB-UniRule"/>
</dbReference>
<dbReference type="GO" id="GO:0046081">
    <property type="term" value="P:dUTP catabolic process"/>
    <property type="evidence" value="ECO:0007669"/>
    <property type="project" value="InterPro"/>
</dbReference>
<dbReference type="CDD" id="cd07557">
    <property type="entry name" value="trimeric_dUTPase"/>
    <property type="match status" value="1"/>
</dbReference>
<dbReference type="Gene3D" id="2.70.40.10">
    <property type="match status" value="1"/>
</dbReference>
<dbReference type="HAMAP" id="MF_00116">
    <property type="entry name" value="dUTPase_bact"/>
    <property type="match status" value="1"/>
</dbReference>
<dbReference type="InterPro" id="IPR008181">
    <property type="entry name" value="dUTPase"/>
</dbReference>
<dbReference type="InterPro" id="IPR029054">
    <property type="entry name" value="dUTPase-like"/>
</dbReference>
<dbReference type="InterPro" id="IPR036157">
    <property type="entry name" value="dUTPase-like_sf"/>
</dbReference>
<dbReference type="InterPro" id="IPR033704">
    <property type="entry name" value="dUTPase_trimeric"/>
</dbReference>
<dbReference type="NCBIfam" id="TIGR00576">
    <property type="entry name" value="dut"/>
    <property type="match status" value="1"/>
</dbReference>
<dbReference type="NCBIfam" id="NF001862">
    <property type="entry name" value="PRK00601.1"/>
    <property type="match status" value="1"/>
</dbReference>
<dbReference type="PANTHER" id="PTHR11241">
    <property type="entry name" value="DEOXYURIDINE 5'-TRIPHOSPHATE NUCLEOTIDOHYDROLASE"/>
    <property type="match status" value="1"/>
</dbReference>
<dbReference type="PANTHER" id="PTHR11241:SF0">
    <property type="entry name" value="DEOXYURIDINE 5'-TRIPHOSPHATE NUCLEOTIDOHYDROLASE"/>
    <property type="match status" value="1"/>
</dbReference>
<dbReference type="Pfam" id="PF00692">
    <property type="entry name" value="dUTPase"/>
    <property type="match status" value="1"/>
</dbReference>
<dbReference type="SUPFAM" id="SSF51283">
    <property type="entry name" value="dUTPase-like"/>
    <property type="match status" value="1"/>
</dbReference>
<accession>Q68WX8</accession>
<comment type="function">
    <text evidence="1">This enzyme is involved in nucleotide metabolism: it produces dUMP, the immediate precursor of thymidine nucleotides and it decreases the intracellular concentration of dUTP so that uracil cannot be incorporated into DNA.</text>
</comment>
<comment type="catalytic activity">
    <reaction evidence="1">
        <text>dUTP + H2O = dUMP + diphosphate + H(+)</text>
        <dbReference type="Rhea" id="RHEA:10248"/>
        <dbReference type="ChEBI" id="CHEBI:15377"/>
        <dbReference type="ChEBI" id="CHEBI:15378"/>
        <dbReference type="ChEBI" id="CHEBI:33019"/>
        <dbReference type="ChEBI" id="CHEBI:61555"/>
        <dbReference type="ChEBI" id="CHEBI:246422"/>
        <dbReference type="EC" id="3.6.1.23"/>
    </reaction>
</comment>
<comment type="cofactor">
    <cofactor evidence="1">
        <name>Mg(2+)</name>
        <dbReference type="ChEBI" id="CHEBI:18420"/>
    </cofactor>
</comment>
<comment type="pathway">
    <text evidence="1">Pyrimidine metabolism; dUMP biosynthesis; dUMP from dCTP (dUTP route): step 2/2.</text>
</comment>
<comment type="similarity">
    <text evidence="1">Belongs to the dUTPase family.</text>
</comment>
<reference key="1">
    <citation type="journal article" date="2004" name="J. Bacteriol.">
        <title>Complete genome sequence of Rickettsia typhi and comparison with sequences of other Rickettsiae.</title>
        <authorList>
            <person name="McLeod M.P."/>
            <person name="Qin X."/>
            <person name="Karpathy S.E."/>
            <person name="Gioia J."/>
            <person name="Highlander S.K."/>
            <person name="Fox G.E."/>
            <person name="McNeill T.Z."/>
            <person name="Jiang H."/>
            <person name="Muzny D."/>
            <person name="Jacob L.S."/>
            <person name="Hawes A.C."/>
            <person name="Sodergren E."/>
            <person name="Gill R."/>
            <person name="Hume J."/>
            <person name="Morgan M."/>
            <person name="Fan G."/>
            <person name="Amin A.G."/>
            <person name="Gibbs R.A."/>
            <person name="Hong C."/>
            <person name="Yu X.-J."/>
            <person name="Walker D.H."/>
            <person name="Weinstock G.M."/>
        </authorList>
    </citation>
    <scope>NUCLEOTIDE SEQUENCE [LARGE SCALE GENOMIC DNA]</scope>
    <source>
        <strain>ATCC VR-144 / Wilmington</strain>
    </source>
</reference>
<name>DUT_RICTY</name>
<keyword id="KW-0378">Hydrolase</keyword>
<keyword id="KW-0460">Magnesium</keyword>
<keyword id="KW-0479">Metal-binding</keyword>
<keyword id="KW-0546">Nucleotide metabolism</keyword>
<sequence>MTIIEVKIKKLENFSGNLPAYATEHSAGVDLIAANEQTILIKVGSIQLIPTGIAIALPDSFEAQIRPRSGLAIKHGITVANSPGTIDADYRGEIKVLLINLGKKDFLIERGMRIAQMIIAKYERVLWAETSILTETMRGRGGFGSTGL</sequence>